<proteinExistence type="uncertain"/>
<reference key="1">
    <citation type="journal article" date="2002" name="Hum. Genet.">
        <title>Identification of additional transcripts in the Williams-Beuren syndrome critical region.</title>
        <authorList>
            <person name="Merla G."/>
            <person name="Ucla C."/>
            <person name="Guipponi M."/>
            <person name="Reymond A."/>
        </authorList>
    </citation>
    <scope>NUCLEOTIDE SEQUENCE [MRNA] (ISOFORM 3)</scope>
    <scope>TISSUE SPECIFICITY</scope>
</reference>
<reference key="2">
    <citation type="journal article" date="2004" name="Nat. Genet.">
        <title>Complete sequencing and characterization of 21,243 full-length human cDNAs.</title>
        <authorList>
            <person name="Ota T."/>
            <person name="Suzuki Y."/>
            <person name="Nishikawa T."/>
            <person name="Otsuki T."/>
            <person name="Sugiyama T."/>
            <person name="Irie R."/>
            <person name="Wakamatsu A."/>
            <person name="Hayashi K."/>
            <person name="Sato H."/>
            <person name="Nagai K."/>
            <person name="Kimura K."/>
            <person name="Makita H."/>
            <person name="Sekine M."/>
            <person name="Obayashi M."/>
            <person name="Nishi T."/>
            <person name="Shibahara T."/>
            <person name="Tanaka T."/>
            <person name="Ishii S."/>
            <person name="Yamamoto J."/>
            <person name="Saito K."/>
            <person name="Kawai Y."/>
            <person name="Isono Y."/>
            <person name="Nakamura Y."/>
            <person name="Nagahari K."/>
            <person name="Murakami K."/>
            <person name="Yasuda T."/>
            <person name="Iwayanagi T."/>
            <person name="Wagatsuma M."/>
            <person name="Shiratori A."/>
            <person name="Sudo H."/>
            <person name="Hosoiri T."/>
            <person name="Kaku Y."/>
            <person name="Kodaira H."/>
            <person name="Kondo H."/>
            <person name="Sugawara M."/>
            <person name="Takahashi M."/>
            <person name="Kanda K."/>
            <person name="Yokoi T."/>
            <person name="Furuya T."/>
            <person name="Kikkawa E."/>
            <person name="Omura Y."/>
            <person name="Abe K."/>
            <person name="Kamihara K."/>
            <person name="Katsuta N."/>
            <person name="Sato K."/>
            <person name="Tanikawa M."/>
            <person name="Yamazaki M."/>
            <person name="Ninomiya K."/>
            <person name="Ishibashi T."/>
            <person name="Yamashita H."/>
            <person name="Murakawa K."/>
            <person name="Fujimori K."/>
            <person name="Tanai H."/>
            <person name="Kimata M."/>
            <person name="Watanabe M."/>
            <person name="Hiraoka S."/>
            <person name="Chiba Y."/>
            <person name="Ishida S."/>
            <person name="Ono Y."/>
            <person name="Takiguchi S."/>
            <person name="Watanabe S."/>
            <person name="Yosida M."/>
            <person name="Hotuta T."/>
            <person name="Kusano J."/>
            <person name="Kanehori K."/>
            <person name="Takahashi-Fujii A."/>
            <person name="Hara H."/>
            <person name="Tanase T.-O."/>
            <person name="Nomura Y."/>
            <person name="Togiya S."/>
            <person name="Komai F."/>
            <person name="Hara R."/>
            <person name="Takeuchi K."/>
            <person name="Arita M."/>
            <person name="Imose N."/>
            <person name="Musashino K."/>
            <person name="Yuuki H."/>
            <person name="Oshima A."/>
            <person name="Sasaki N."/>
            <person name="Aotsuka S."/>
            <person name="Yoshikawa Y."/>
            <person name="Matsunawa H."/>
            <person name="Ichihara T."/>
            <person name="Shiohata N."/>
            <person name="Sano S."/>
            <person name="Moriya S."/>
            <person name="Momiyama H."/>
            <person name="Satoh N."/>
            <person name="Takami S."/>
            <person name="Terashima Y."/>
            <person name="Suzuki O."/>
            <person name="Nakagawa S."/>
            <person name="Senoh A."/>
            <person name="Mizoguchi H."/>
            <person name="Goto Y."/>
            <person name="Shimizu F."/>
            <person name="Wakebe H."/>
            <person name="Hishigaki H."/>
            <person name="Watanabe T."/>
            <person name="Sugiyama A."/>
            <person name="Takemoto M."/>
            <person name="Kawakami B."/>
            <person name="Yamazaki M."/>
            <person name="Watanabe K."/>
            <person name="Kumagai A."/>
            <person name="Itakura S."/>
            <person name="Fukuzumi Y."/>
            <person name="Fujimori Y."/>
            <person name="Komiyama M."/>
            <person name="Tashiro H."/>
            <person name="Tanigami A."/>
            <person name="Fujiwara T."/>
            <person name="Ono T."/>
            <person name="Yamada K."/>
            <person name="Fujii Y."/>
            <person name="Ozaki K."/>
            <person name="Hirao M."/>
            <person name="Ohmori Y."/>
            <person name="Kawabata A."/>
            <person name="Hikiji T."/>
            <person name="Kobatake N."/>
            <person name="Inagaki H."/>
            <person name="Ikema Y."/>
            <person name="Okamoto S."/>
            <person name="Okitani R."/>
            <person name="Kawakami T."/>
            <person name="Noguchi S."/>
            <person name="Itoh T."/>
            <person name="Shigeta K."/>
            <person name="Senba T."/>
            <person name="Matsumura K."/>
            <person name="Nakajima Y."/>
            <person name="Mizuno T."/>
            <person name="Morinaga M."/>
            <person name="Sasaki M."/>
            <person name="Togashi T."/>
            <person name="Oyama M."/>
            <person name="Hata H."/>
            <person name="Watanabe M."/>
            <person name="Komatsu T."/>
            <person name="Mizushima-Sugano J."/>
            <person name="Satoh T."/>
            <person name="Shirai Y."/>
            <person name="Takahashi Y."/>
            <person name="Nakagawa K."/>
            <person name="Okumura K."/>
            <person name="Nagase T."/>
            <person name="Nomura N."/>
            <person name="Kikuchi H."/>
            <person name="Masuho Y."/>
            <person name="Yamashita R."/>
            <person name="Nakai K."/>
            <person name="Yada T."/>
            <person name="Nakamura Y."/>
            <person name="Ohara O."/>
            <person name="Isogai T."/>
            <person name="Sugano S."/>
        </authorList>
    </citation>
    <scope>NUCLEOTIDE SEQUENCE [LARGE SCALE MRNA] (ISOFORM 2)</scope>
    <source>
        <tissue>Thymus</tissue>
        <tissue>Uterus</tissue>
    </source>
</reference>
<reference key="3">
    <citation type="journal article" date="2004" name="Genome Res.">
        <title>The status, quality, and expansion of the NIH full-length cDNA project: the Mammalian Gene Collection (MGC).</title>
        <authorList>
            <consortium name="The MGC Project Team"/>
        </authorList>
    </citation>
    <scope>NUCLEOTIDE SEQUENCE [LARGE SCALE MRNA] (ISOFORMS 1 AND 2)</scope>
    <source>
        <tissue>Brain</tissue>
    </source>
</reference>
<sequence>MATLLAWVGVSCCELAEEDFLAVSPLDPRYREVHYVLLDPSCSGSGMPSRQLEDPGAGTPSPVRLHALAGFQQRALCHALTFPSLQRLVYSMCSLCQEENEDMVPDALQQNPGAFRLAPALPARPHRGLSTFPGAEHCLRASPKTTLSGGFFVAVIERVEMPT</sequence>
<gene>
    <name type="primary">NSUN5P1</name>
    <name type="synonym">NSUN5B</name>
    <name type="synonym">WBSCR20B</name>
</gene>
<name>NSN5B_HUMAN</name>
<evidence type="ECO:0000255" key="1">
    <source>
        <dbReference type="PROSITE-ProRule" id="PRU01023"/>
    </source>
</evidence>
<evidence type="ECO:0000269" key="2">
    <source>
    </source>
</evidence>
<evidence type="ECO:0000303" key="3">
    <source>
    </source>
</evidence>
<evidence type="ECO:0000303" key="4">
    <source>
    </source>
</evidence>
<evidence type="ECO:0000303" key="5">
    <source>
    </source>
</evidence>
<evidence type="ECO:0000305" key="6"/>
<feature type="chain" id="PRO_0000261671" description="Putative NOL1/NOP2/Sun domain family member 5B">
    <location>
        <begin position="1"/>
        <end position="163"/>
    </location>
</feature>
<feature type="active site" description="Nucleophile" evidence="1">
    <location>
        <position position="93"/>
    </location>
</feature>
<feature type="splice variant" id="VSP_021757" description="In isoform 2 and isoform 3." evidence="3 4 5">
    <location>
        <begin position="1"/>
        <end position="46"/>
    </location>
</feature>
<feature type="splice variant" id="VSP_021758" description="In isoform 3." evidence="3">
    <original>T</original>
    <variation>TSASQAKASAPERTPSPAPKRKKRQQRAAAGACTPPCT</variation>
    <location>
        <position position="163"/>
    </location>
</feature>
<comment type="alternative products">
    <event type="alternative splicing"/>
    <isoform>
        <id>Q3KNT7-1</id>
        <name>1</name>
        <sequence type="displayed"/>
    </isoform>
    <isoform>
        <id>Q3KNT7-2</id>
        <name>2</name>
        <sequence type="described" ref="VSP_021757"/>
    </isoform>
    <isoform>
        <id>Q3KNT7-3</id>
        <name>3</name>
        <sequence type="described" ref="VSP_021757 VSP_021758"/>
    </isoform>
</comment>
<comment type="tissue specificity">
    <text evidence="2">Ubiquitous.</text>
</comment>
<comment type="disease">
    <text>NSUN5P1 is located in the Williams-Beuren syndrome (WBS) critical region. WBS results from a hemizygous deletion of several genes on chromosome 7q11.23, thought to arise as a consequence of unequal crossing over between highly homologous low-copy repeat sequences flanking the deleted region.</text>
</comment>
<comment type="similarity">
    <text evidence="1">Belongs to the class I-like SAM-binding methyltransferase superfamily. RsmB/NOP family.</text>
</comment>
<comment type="caution">
    <text evidence="6">Could be the product of a pseudogene.</text>
</comment>
<keyword id="KW-0025">Alternative splicing</keyword>
<keyword id="KW-0489">Methyltransferase</keyword>
<keyword id="KW-1185">Reference proteome</keyword>
<keyword id="KW-0694">RNA-binding</keyword>
<keyword id="KW-0949">S-adenosyl-L-methionine</keyword>
<keyword id="KW-0808">Transferase</keyword>
<keyword id="KW-0856">Williams-Beuren syndrome</keyword>
<protein>
    <recommendedName>
        <fullName>Putative NOL1/NOP2/Sun domain family member 5B</fullName>
        <ecNumber>2.1.1.-</ecNumber>
    </recommendedName>
    <alternativeName>
        <fullName>Williams-Beuren syndrome chromosomal region 20B protein</fullName>
    </alternativeName>
</protein>
<dbReference type="EC" id="2.1.1.-"/>
<dbReference type="EMBL" id="AF416610">
    <property type="protein sequence ID" value="AAM62318.1"/>
    <property type="molecule type" value="mRNA"/>
</dbReference>
<dbReference type="EMBL" id="AK126486">
    <property type="protein sequence ID" value="BAG54336.1"/>
    <property type="molecule type" value="mRNA"/>
</dbReference>
<dbReference type="EMBL" id="AK128374">
    <property type="protein sequence ID" value="BAG54668.1"/>
    <property type="molecule type" value="mRNA"/>
</dbReference>
<dbReference type="EMBL" id="BC093978">
    <property type="protein sequence ID" value="AAH93978.1"/>
    <property type="molecule type" value="mRNA"/>
</dbReference>
<dbReference type="EMBL" id="BC107112">
    <property type="protein sequence ID" value="AAI07113.1"/>
    <property type="molecule type" value="mRNA"/>
</dbReference>
<dbReference type="SMR" id="Q3KNT7"/>
<dbReference type="FunCoup" id="Q3KNT7">
    <property type="interactions" value="2"/>
</dbReference>
<dbReference type="IntAct" id="Q3KNT7">
    <property type="interactions" value="57"/>
</dbReference>
<dbReference type="GlyGen" id="Q3KNT7">
    <property type="glycosylation" value="1 site"/>
</dbReference>
<dbReference type="iPTMnet" id="Q3KNT7"/>
<dbReference type="PhosphoSitePlus" id="Q3KNT7"/>
<dbReference type="BioMuta" id="HGNC:19146"/>
<dbReference type="jPOST" id="Q3KNT7"/>
<dbReference type="MassIVE" id="Q3KNT7"/>
<dbReference type="PeptideAtlas" id="Q3KNT7"/>
<dbReference type="ProteomicsDB" id="61699">
    <molecule id="Q3KNT7-1"/>
</dbReference>
<dbReference type="ProteomicsDB" id="61700">
    <molecule id="Q3KNT7-2"/>
</dbReference>
<dbReference type="ProteomicsDB" id="61701">
    <molecule id="Q3KNT7-3"/>
</dbReference>
<dbReference type="AGR" id="HGNC:19146"/>
<dbReference type="GeneCards" id="NSUN5P1"/>
<dbReference type="HGNC" id="HGNC:19146">
    <property type="gene designation" value="NSUN5P1"/>
</dbReference>
<dbReference type="neXtProt" id="NX_Q3KNT7"/>
<dbReference type="PharmGKB" id="PA143485559"/>
<dbReference type="InParanoid" id="Q3KNT7"/>
<dbReference type="PAN-GO" id="Q3KNT7">
    <property type="GO annotations" value="2 GO annotations based on evolutionary models"/>
</dbReference>
<dbReference type="PhylomeDB" id="Q3KNT7"/>
<dbReference type="PathwayCommons" id="Q3KNT7"/>
<dbReference type="ChiTaRS" id="NSUN5P1">
    <property type="organism name" value="human"/>
</dbReference>
<dbReference type="Pharos" id="Q3KNT7">
    <property type="development level" value="Tdark"/>
</dbReference>
<dbReference type="Proteomes" id="UP000005640">
    <property type="component" value="Unplaced"/>
</dbReference>
<dbReference type="RNAct" id="Q3KNT7">
    <property type="molecule type" value="protein"/>
</dbReference>
<dbReference type="GO" id="GO:0003723">
    <property type="term" value="F:RNA binding"/>
    <property type="evidence" value="ECO:0007669"/>
    <property type="project" value="UniProtKB-KW"/>
</dbReference>
<dbReference type="GO" id="GO:0008173">
    <property type="term" value="F:RNA methyltransferase activity"/>
    <property type="evidence" value="ECO:0007669"/>
    <property type="project" value="InterPro"/>
</dbReference>
<dbReference type="GO" id="GO:0008757">
    <property type="term" value="F:S-adenosylmethionine-dependent methyltransferase activity"/>
    <property type="evidence" value="ECO:0007669"/>
    <property type="project" value="UniProtKB-ARBA"/>
</dbReference>
<dbReference type="GO" id="GO:0001510">
    <property type="term" value="P:RNA methylation"/>
    <property type="evidence" value="ECO:0007669"/>
    <property type="project" value="InterPro"/>
</dbReference>
<dbReference type="GO" id="GO:0006396">
    <property type="term" value="P:RNA processing"/>
    <property type="evidence" value="ECO:0007669"/>
    <property type="project" value="UniProtKB-ARBA"/>
</dbReference>
<dbReference type="Gene3D" id="3.40.50.150">
    <property type="entry name" value="Vaccinia Virus protein VP39"/>
    <property type="match status" value="1"/>
</dbReference>
<dbReference type="InterPro" id="IPR049560">
    <property type="entry name" value="MeTrfase_RsmB-F_NOP2_cat"/>
</dbReference>
<dbReference type="InterPro" id="IPR001678">
    <property type="entry name" value="MeTrfase_RsmB-F_NOP2_dom"/>
</dbReference>
<dbReference type="InterPro" id="IPR023267">
    <property type="entry name" value="RCMT"/>
</dbReference>
<dbReference type="InterPro" id="IPR029063">
    <property type="entry name" value="SAM-dependent_MTases_sf"/>
</dbReference>
<dbReference type="PANTHER" id="PTHR22807:SF4">
    <property type="entry name" value="28S RRNA (CYTOSINE-C(5))-METHYLTRANSFERASE"/>
    <property type="match status" value="1"/>
</dbReference>
<dbReference type="PANTHER" id="PTHR22807">
    <property type="entry name" value="NOP2 YEAST -RELATED NOL1/NOP2/FMU SUN DOMAIN-CONTAINING"/>
    <property type="match status" value="1"/>
</dbReference>
<dbReference type="Pfam" id="PF01189">
    <property type="entry name" value="Methyltr_RsmB-F"/>
    <property type="match status" value="1"/>
</dbReference>
<dbReference type="PRINTS" id="PR02008">
    <property type="entry name" value="RCMTFAMILY"/>
</dbReference>
<dbReference type="SUPFAM" id="SSF53335">
    <property type="entry name" value="S-adenosyl-L-methionine-dependent methyltransferases"/>
    <property type="match status" value="1"/>
</dbReference>
<dbReference type="PROSITE" id="PS51686">
    <property type="entry name" value="SAM_MT_RSMB_NOP"/>
    <property type="match status" value="1"/>
</dbReference>
<organism>
    <name type="scientific">Homo sapiens</name>
    <name type="common">Human</name>
    <dbReference type="NCBI Taxonomy" id="9606"/>
    <lineage>
        <taxon>Eukaryota</taxon>
        <taxon>Metazoa</taxon>
        <taxon>Chordata</taxon>
        <taxon>Craniata</taxon>
        <taxon>Vertebrata</taxon>
        <taxon>Euteleostomi</taxon>
        <taxon>Mammalia</taxon>
        <taxon>Eutheria</taxon>
        <taxon>Euarchontoglires</taxon>
        <taxon>Primates</taxon>
        <taxon>Haplorrhini</taxon>
        <taxon>Catarrhini</taxon>
        <taxon>Hominidae</taxon>
        <taxon>Homo</taxon>
    </lineage>
</organism>
<accession>Q3KNT7</accession>
<accession>B3KX24</accession>
<accession>Q52LC6</accession>
<accession>Q8N728</accession>